<reference key="1">
    <citation type="journal article" date="2001" name="Development">
        <title>A subtilisin-like serine protease is required for epidermal surface formation in Arabidopsis embryos and juvenile plants.</title>
        <authorList>
            <person name="Tanaka H."/>
            <person name="Onouchi H."/>
            <person name="Kondo M."/>
            <person name="Hara-Nishimura I."/>
            <person name="Nishimura M."/>
            <person name="Machida C."/>
            <person name="Machida Y."/>
        </authorList>
    </citation>
    <scope>NUCLEOTIDE SEQUENCE [MRNA]</scope>
    <scope>FUNCTION</scope>
    <scope>DEVELOPMENTAL STAGE</scope>
    <scope>DISRUPTION PHENOTYPE</scope>
    <scope>MUTAGENESIS OF GLY-230</scope>
    <source>
        <strain>cv. Landsberg erecta</strain>
    </source>
</reference>
<reference key="2">
    <citation type="journal article" date="2000" name="Nature">
        <title>Sequence and analysis of chromosome 1 of the plant Arabidopsis thaliana.</title>
        <authorList>
            <person name="Theologis A."/>
            <person name="Ecker J.R."/>
            <person name="Palm C.J."/>
            <person name="Federspiel N.A."/>
            <person name="Kaul S."/>
            <person name="White O."/>
            <person name="Alonso J."/>
            <person name="Altafi H."/>
            <person name="Araujo R."/>
            <person name="Bowman C.L."/>
            <person name="Brooks S.Y."/>
            <person name="Buehler E."/>
            <person name="Chan A."/>
            <person name="Chao Q."/>
            <person name="Chen H."/>
            <person name="Cheuk R.F."/>
            <person name="Chin C.W."/>
            <person name="Chung M.K."/>
            <person name="Conn L."/>
            <person name="Conway A.B."/>
            <person name="Conway A.R."/>
            <person name="Creasy T.H."/>
            <person name="Dewar K."/>
            <person name="Dunn P."/>
            <person name="Etgu P."/>
            <person name="Feldblyum T.V."/>
            <person name="Feng J.-D."/>
            <person name="Fong B."/>
            <person name="Fujii C.Y."/>
            <person name="Gill J.E."/>
            <person name="Goldsmith A.D."/>
            <person name="Haas B."/>
            <person name="Hansen N.F."/>
            <person name="Hughes B."/>
            <person name="Huizar L."/>
            <person name="Hunter J.L."/>
            <person name="Jenkins J."/>
            <person name="Johnson-Hopson C."/>
            <person name="Khan S."/>
            <person name="Khaykin E."/>
            <person name="Kim C.J."/>
            <person name="Koo H.L."/>
            <person name="Kremenetskaia I."/>
            <person name="Kurtz D.B."/>
            <person name="Kwan A."/>
            <person name="Lam B."/>
            <person name="Langin-Hooper S."/>
            <person name="Lee A."/>
            <person name="Lee J.M."/>
            <person name="Lenz C.A."/>
            <person name="Li J.H."/>
            <person name="Li Y.-P."/>
            <person name="Lin X."/>
            <person name="Liu S.X."/>
            <person name="Liu Z.A."/>
            <person name="Luros J.S."/>
            <person name="Maiti R."/>
            <person name="Marziali A."/>
            <person name="Militscher J."/>
            <person name="Miranda M."/>
            <person name="Nguyen M."/>
            <person name="Nierman W.C."/>
            <person name="Osborne B.I."/>
            <person name="Pai G."/>
            <person name="Peterson J."/>
            <person name="Pham P.K."/>
            <person name="Rizzo M."/>
            <person name="Rooney T."/>
            <person name="Rowley D."/>
            <person name="Sakano H."/>
            <person name="Salzberg S.L."/>
            <person name="Schwartz J.R."/>
            <person name="Shinn P."/>
            <person name="Southwick A.M."/>
            <person name="Sun H."/>
            <person name="Tallon L.J."/>
            <person name="Tambunga G."/>
            <person name="Toriumi M.J."/>
            <person name="Town C.D."/>
            <person name="Utterback T."/>
            <person name="Van Aken S."/>
            <person name="Vaysberg M."/>
            <person name="Vysotskaia V.S."/>
            <person name="Walker M."/>
            <person name="Wu D."/>
            <person name="Yu G."/>
            <person name="Fraser C.M."/>
            <person name="Venter J.C."/>
            <person name="Davis R.W."/>
        </authorList>
    </citation>
    <scope>NUCLEOTIDE SEQUENCE [LARGE SCALE GENOMIC DNA]</scope>
    <source>
        <strain>cv. Columbia</strain>
    </source>
</reference>
<reference key="3">
    <citation type="journal article" date="2017" name="Plant J.">
        <title>Araport11: a complete reannotation of the Arabidopsis thaliana reference genome.</title>
        <authorList>
            <person name="Cheng C.Y."/>
            <person name="Krishnakumar V."/>
            <person name="Chan A.P."/>
            <person name="Thibaud-Nissen F."/>
            <person name="Schobel S."/>
            <person name="Town C.D."/>
        </authorList>
    </citation>
    <scope>GENOME REANNOTATION</scope>
    <source>
        <strain>cv. Columbia</strain>
    </source>
</reference>
<reference key="4">
    <citation type="journal article" date="2005" name="PLoS Comput. Biol.">
        <title>Inferring hypotheses on functional relationships of genes: Analysis of the Arabidopsis thaliana subtilase gene family.</title>
        <authorList>
            <person name="Rautengarten C."/>
            <person name="Steinhauser D."/>
            <person name="Bussis D."/>
            <person name="Stintzi A."/>
            <person name="Schaller A."/>
            <person name="Kopka J."/>
            <person name="Altmann T."/>
        </authorList>
    </citation>
    <scope>GENE FAMILY</scope>
    <scope>NOMENCLATURE</scope>
</reference>
<reference key="5">
    <citation type="journal article" date="2007" name="Development">
        <title>Novel receptor-like kinase ALE2 controls shoot development by specifying epidermis in Arabidopsis.</title>
        <authorList>
            <person name="Tanaka H."/>
            <person name="Watanabe M."/>
            <person name="Sasabe M."/>
            <person name="Hiroe T."/>
            <person name="Tanaka T."/>
            <person name="Tsukaya H."/>
            <person name="Ikezaki M."/>
            <person name="Machida C."/>
            <person name="Machida Y."/>
        </authorList>
    </citation>
    <scope>FUNCTION</scope>
</reference>
<reference key="6">
    <citation type="journal article" date="2013" name="Development">
        <title>ZHOUPI controls embryonic cuticle formation via a signalling pathway involving the subtilisin protease ABNORMAL LEAF-SHAPE1 and the receptor kinases GASSHO1 and GASSHO2.</title>
        <authorList>
            <person name="Xing Q."/>
            <person name="Creff A."/>
            <person name="Waters A."/>
            <person name="Tanaka H."/>
            <person name="Goodrich J."/>
            <person name="Ingram G.C."/>
        </authorList>
    </citation>
    <scope>FUNCTION</scope>
</reference>
<name>SBT24_ARATH</name>
<keyword id="KW-0217">Developmental protein</keyword>
<keyword id="KW-0325">Glycoprotein</keyword>
<keyword id="KW-0378">Hydrolase</keyword>
<keyword id="KW-0645">Protease</keyword>
<keyword id="KW-1185">Reference proteome</keyword>
<keyword id="KW-0964">Secreted</keyword>
<keyword id="KW-0720">Serine protease</keyword>
<keyword id="KW-0732">Signal</keyword>
<dbReference type="EC" id="3.4.21.-" evidence="9"/>
<dbReference type="EMBL" id="AB060809">
    <property type="protein sequence ID" value="BAB70678.1"/>
    <property type="molecule type" value="mRNA"/>
</dbReference>
<dbReference type="EMBL" id="AC003113">
    <property type="protein sequence ID" value="AAF70850.1"/>
    <property type="status" value="ALT_SEQ"/>
    <property type="molecule type" value="Genomic_DNA"/>
</dbReference>
<dbReference type="EMBL" id="CP002684">
    <property type="protein sequence ID" value="AEE33956.1"/>
    <property type="molecule type" value="Genomic_DNA"/>
</dbReference>
<dbReference type="PIR" id="T01444">
    <property type="entry name" value="T01444"/>
</dbReference>
<dbReference type="RefSeq" id="NP_564793.2">
    <property type="nucleotide sequence ID" value="NM_104914.2"/>
</dbReference>
<dbReference type="SMR" id="F4HYR6"/>
<dbReference type="FunCoup" id="F4HYR6">
    <property type="interactions" value="30"/>
</dbReference>
<dbReference type="STRING" id="3702.F4HYR6"/>
<dbReference type="MEROPS" id="S08.014"/>
<dbReference type="GlyCosmos" id="F4HYR6">
    <property type="glycosylation" value="6 sites, No reported glycans"/>
</dbReference>
<dbReference type="GlyGen" id="F4HYR6">
    <property type="glycosylation" value="6 sites"/>
</dbReference>
<dbReference type="iPTMnet" id="F4HYR6"/>
<dbReference type="PaxDb" id="3702-AT1G62340.1"/>
<dbReference type="ProteomicsDB" id="226592"/>
<dbReference type="EnsemblPlants" id="AT1G62340.1">
    <property type="protein sequence ID" value="AT1G62340.1"/>
    <property type="gene ID" value="AT1G62340"/>
</dbReference>
<dbReference type="GeneID" id="842532"/>
<dbReference type="Gramene" id="AT1G62340.1">
    <property type="protein sequence ID" value="AT1G62340.1"/>
    <property type="gene ID" value="AT1G62340"/>
</dbReference>
<dbReference type="KEGG" id="ath:AT1G62340"/>
<dbReference type="Araport" id="AT1G62340"/>
<dbReference type="TAIR" id="AT1G62340">
    <property type="gene designation" value="ALE1"/>
</dbReference>
<dbReference type="eggNOG" id="ENOG502QUPZ">
    <property type="taxonomic scope" value="Eukaryota"/>
</dbReference>
<dbReference type="HOGENOM" id="CLU_000625_3_1_1"/>
<dbReference type="InParanoid" id="F4HYR6"/>
<dbReference type="OMA" id="DIFMLFA"/>
<dbReference type="PRO" id="PR:F4HYR6"/>
<dbReference type="Proteomes" id="UP000006548">
    <property type="component" value="Chromosome 1"/>
</dbReference>
<dbReference type="ExpressionAtlas" id="F4HYR6">
    <property type="expression patterns" value="baseline and differential"/>
</dbReference>
<dbReference type="GO" id="GO:0005576">
    <property type="term" value="C:extracellular region"/>
    <property type="evidence" value="ECO:0007669"/>
    <property type="project" value="UniProtKB-SubCell"/>
</dbReference>
<dbReference type="GO" id="GO:0004252">
    <property type="term" value="F:serine-type endopeptidase activity"/>
    <property type="evidence" value="ECO:0007669"/>
    <property type="project" value="InterPro"/>
</dbReference>
<dbReference type="GO" id="GO:0090558">
    <property type="term" value="P:plant epidermis development"/>
    <property type="evidence" value="ECO:0000315"/>
    <property type="project" value="TAIR"/>
</dbReference>
<dbReference type="GO" id="GO:0006508">
    <property type="term" value="P:proteolysis"/>
    <property type="evidence" value="ECO:0007669"/>
    <property type="project" value="UniProtKB-KW"/>
</dbReference>
<dbReference type="CDD" id="cd02120">
    <property type="entry name" value="PA_subtilisin_like"/>
    <property type="match status" value="1"/>
</dbReference>
<dbReference type="CDD" id="cd04852">
    <property type="entry name" value="Peptidases_S8_3"/>
    <property type="match status" value="1"/>
</dbReference>
<dbReference type="Gene3D" id="2.60.40.2310">
    <property type="match status" value="1"/>
</dbReference>
<dbReference type="Gene3D" id="3.50.30.30">
    <property type="match status" value="1"/>
</dbReference>
<dbReference type="Gene3D" id="3.30.70.80">
    <property type="entry name" value="Peptidase S8 propeptide/proteinase inhibitor I9"/>
    <property type="match status" value="1"/>
</dbReference>
<dbReference type="Gene3D" id="3.40.50.200">
    <property type="entry name" value="Peptidase S8/S53 domain"/>
    <property type="match status" value="1"/>
</dbReference>
<dbReference type="InterPro" id="IPR000209">
    <property type="entry name" value="Peptidase_S8/S53_dom"/>
</dbReference>
<dbReference type="InterPro" id="IPR036852">
    <property type="entry name" value="Peptidase_S8/S53_dom_sf"/>
</dbReference>
<dbReference type="InterPro" id="IPR023827">
    <property type="entry name" value="Peptidase_S8_Asp-AS"/>
</dbReference>
<dbReference type="InterPro" id="IPR022398">
    <property type="entry name" value="Peptidase_S8_His-AS"/>
</dbReference>
<dbReference type="InterPro" id="IPR023828">
    <property type="entry name" value="Peptidase_S8_Ser-AS"/>
</dbReference>
<dbReference type="InterPro" id="IPR015500">
    <property type="entry name" value="Peptidase_S8_subtilisin-rel"/>
</dbReference>
<dbReference type="InterPro" id="IPR034197">
    <property type="entry name" value="Peptidases_S8_3"/>
</dbReference>
<dbReference type="InterPro" id="IPR010259">
    <property type="entry name" value="S8pro/Inhibitor_I9"/>
</dbReference>
<dbReference type="InterPro" id="IPR037045">
    <property type="entry name" value="S8pro/Inhibitor_I9_sf"/>
</dbReference>
<dbReference type="InterPro" id="IPR045051">
    <property type="entry name" value="SBT"/>
</dbReference>
<dbReference type="InterPro" id="IPR041469">
    <property type="entry name" value="Subtilisin-like_FN3"/>
</dbReference>
<dbReference type="PANTHER" id="PTHR10795">
    <property type="entry name" value="PROPROTEIN CONVERTASE SUBTILISIN/KEXIN"/>
    <property type="match status" value="1"/>
</dbReference>
<dbReference type="Pfam" id="PF17766">
    <property type="entry name" value="fn3_6"/>
    <property type="match status" value="1"/>
</dbReference>
<dbReference type="Pfam" id="PF05922">
    <property type="entry name" value="Inhibitor_I9"/>
    <property type="match status" value="1"/>
</dbReference>
<dbReference type="Pfam" id="PF00082">
    <property type="entry name" value="Peptidase_S8"/>
    <property type="match status" value="1"/>
</dbReference>
<dbReference type="PRINTS" id="PR00723">
    <property type="entry name" value="SUBTILISIN"/>
</dbReference>
<dbReference type="SUPFAM" id="SSF52743">
    <property type="entry name" value="Subtilisin-like"/>
    <property type="match status" value="1"/>
</dbReference>
<dbReference type="PROSITE" id="PS51892">
    <property type="entry name" value="SUBTILASE"/>
    <property type="match status" value="1"/>
</dbReference>
<dbReference type="PROSITE" id="PS00136">
    <property type="entry name" value="SUBTILASE_ASP"/>
    <property type="match status" value="1"/>
</dbReference>
<dbReference type="PROSITE" id="PS00137">
    <property type="entry name" value="SUBTILASE_HIS"/>
    <property type="match status" value="1"/>
</dbReference>
<dbReference type="PROSITE" id="PS00138">
    <property type="entry name" value="SUBTILASE_SER"/>
    <property type="match status" value="1"/>
</dbReference>
<organism>
    <name type="scientific">Arabidopsis thaliana</name>
    <name type="common">Mouse-ear cress</name>
    <dbReference type="NCBI Taxonomy" id="3702"/>
    <lineage>
        <taxon>Eukaryota</taxon>
        <taxon>Viridiplantae</taxon>
        <taxon>Streptophyta</taxon>
        <taxon>Embryophyta</taxon>
        <taxon>Tracheophyta</taxon>
        <taxon>Spermatophyta</taxon>
        <taxon>Magnoliopsida</taxon>
        <taxon>eudicotyledons</taxon>
        <taxon>Gunneridae</taxon>
        <taxon>Pentapetalae</taxon>
        <taxon>rosids</taxon>
        <taxon>malvids</taxon>
        <taxon>Brassicales</taxon>
        <taxon>Brassicaceae</taxon>
        <taxon>Camelineae</taxon>
        <taxon>Arabidopsis</taxon>
    </lineage>
</organism>
<protein>
    <recommendedName>
        <fullName evidence="8">Subtilisin-like protease SBT2.4</fullName>
        <ecNumber evidence="9">3.4.21.-</ecNumber>
    </recommendedName>
    <alternativeName>
        <fullName evidence="7">Protein ABNORMAL LEAF SHAPE 1</fullName>
    </alternativeName>
    <alternativeName>
        <fullName evidence="8">Subtilase subfamily 2 member 4</fullName>
        <shortName evidence="8">AtSBT2.4</shortName>
    </alternativeName>
</protein>
<proteinExistence type="evidence at protein level"/>
<comment type="function">
    <text evidence="4 5 6">Serine protease required for epidermal surface formation in embryos and juvenile plants (PubMed:11731449, PubMed:17376810, PubMed:23318634). Involved in embryonic cuticle formation downstream of BHLH95/ZOU (PubMed:23318634).</text>
</comment>
<comment type="subcellular location">
    <subcellularLocation>
        <location evidence="9">Secreted</location>
    </subcellularLocation>
</comment>
<comment type="developmental stage">
    <text evidence="4">Expressed in the endosperm cells during embryo development.</text>
</comment>
<comment type="disruption phenotype">
    <text evidence="4">Seedlings lethality when homozygous due to water loss. Mutant seedling grown under high humidity can survive and show small, crinkled cotyledons and fused leaves due to impaired cuticule formation.</text>
</comment>
<comment type="similarity">
    <text evidence="9">Belongs to the peptidase S8 family.</text>
</comment>
<comment type="sequence caution" evidence="9">
    <conflict type="erroneous gene model prediction">
        <sequence resource="EMBL-CDS" id="AAF70850"/>
    </conflict>
</comment>
<accession>F4HYR6</accession>
<accession>O48798</accession>
<accession>Q948Q4</accession>
<gene>
    <name evidence="8" type="primary">SBT2.4</name>
    <name evidence="7" type="synonym">ALE1</name>
    <name evidence="10" type="ordered locus">At1g62340</name>
    <name evidence="11" type="ORF">F2401.7</name>
</gene>
<evidence type="ECO:0000255" key="1"/>
<evidence type="ECO:0000255" key="2">
    <source>
        <dbReference type="PROSITE-ProRule" id="PRU00498"/>
    </source>
</evidence>
<evidence type="ECO:0000255" key="3">
    <source>
        <dbReference type="PROSITE-ProRule" id="PRU01240"/>
    </source>
</evidence>
<evidence type="ECO:0000269" key="4">
    <source>
    </source>
</evidence>
<evidence type="ECO:0000269" key="5">
    <source>
    </source>
</evidence>
<evidence type="ECO:0000269" key="6">
    <source>
    </source>
</evidence>
<evidence type="ECO:0000303" key="7">
    <source>
    </source>
</evidence>
<evidence type="ECO:0000303" key="8">
    <source>
    </source>
</evidence>
<evidence type="ECO:0000305" key="9"/>
<evidence type="ECO:0000312" key="10">
    <source>
        <dbReference type="Araport" id="AT1G62340"/>
    </source>
</evidence>
<evidence type="ECO:0000312" key="11">
    <source>
        <dbReference type="EMBL" id="AAF70850.1"/>
    </source>
</evidence>
<sequence length="832" mass="89066">METNPRKLRSYSYICLIVCIFVLVVCAILSRAEEKEGKGENDDHIPKIYSILVEGEPLAFRASTNINSKAMALEAKKIEEIHDEILGSTLEKGSYTKLYSFKHVINAIAVRTTASQAKKLGKTKGVKAVEEDKGVKLMTTYTPDFLELPQQVWQKISNEGDRRAGEDIVIGFVDTGINPTHPSFAALDLTNPYSSNLSRLHFSGDCEIGPFFPPGSCNGKIISARFFSAGARASGALNSSLDILSPFDASGHGSHVASIAAGNAGVPVIVDGFFYGRASGMAPRSRIAVYKAIYPSIGTLVDVIAAIDQAIMDGVDVLTLSVGPDEPPVDKPTVLGIFDLAMLLARKAGVFVVQAVGNNGPSPSSVLSYSPWVVGVAAGNTDRSYPAPLILDGGQTVQGVGLSGPTLGAPLVQHRLVLAKDAVRTNGSVLQPLTRDIEECQRPENFDPAAVFGSIVICTFSDGFYNQMSTVLAITQTARTLGFMGFILIANPRFGDYVAEPVIFSAPGILIPTVSAAQIILRYYEEKTFRDTRGVATQFGARARIGEGRNSVFAGKAPVVSRFSSRGPAFIDATRSPLDVLKPDILAPGHQIWGAWSLPSAFDPILTGRSFAILSGTSMATPHIAGIGALIKQLNPSWTPAMIASAISTTANEYDSNGEIISAEYYELSRLFPSNHFDHGAGHVNPARALDPGLVLPAGFEDYISFLCSLPNISPATIRDATGVLCTTTLSHPANLNHPSVTISALKESLVVRRSFQDVSNKTETYLGSVLPPNGTTVRLTPTWFTVPPQKTQDLDIEFNVTQVLNKFTFGEVVLTGSLNHIIRIPLSVKTI</sequence>
<feature type="signal peptide" evidence="1">
    <location>
        <begin position="1"/>
        <end position="27"/>
    </location>
</feature>
<feature type="chain" id="PRO_0000431966" description="Subtilisin-like protease SBT2.4" evidence="1">
    <location>
        <begin position="28"/>
        <end position="832"/>
    </location>
</feature>
<feature type="domain" description="Inhibitor I9" evidence="1">
    <location>
        <begin position="74"/>
        <end position="138"/>
    </location>
</feature>
<feature type="domain" description="Peptidase S8" evidence="3">
    <location>
        <begin position="150"/>
        <end position="690"/>
    </location>
</feature>
<feature type="domain" description="PA" evidence="1">
    <location>
        <begin position="425"/>
        <end position="524"/>
    </location>
</feature>
<feature type="active site" description="Charge relay system" evidence="3">
    <location>
        <position position="174"/>
    </location>
</feature>
<feature type="active site" description="Charge relay system" evidence="3">
    <location>
        <position position="252"/>
    </location>
</feature>
<feature type="active site" description="Charge relay system" evidence="3">
    <location>
        <position position="618"/>
    </location>
</feature>
<feature type="glycosylation site" description="N-linked (GlcNAc...) asparagine" evidence="2">
    <location>
        <position position="196"/>
    </location>
</feature>
<feature type="glycosylation site" description="N-linked (GlcNAc...) asparagine" evidence="2">
    <location>
        <position position="238"/>
    </location>
</feature>
<feature type="glycosylation site" description="N-linked (GlcNAc...) asparagine" evidence="2">
    <location>
        <position position="426"/>
    </location>
</feature>
<feature type="glycosylation site" description="N-linked (GlcNAc...) asparagine" evidence="2">
    <location>
        <position position="761"/>
    </location>
</feature>
<feature type="glycosylation site" description="N-linked (GlcNAc...) asparagine" evidence="2">
    <location>
        <position position="774"/>
    </location>
</feature>
<feature type="glycosylation site" description="N-linked (GlcNAc...) asparagine" evidence="2">
    <location>
        <position position="800"/>
    </location>
</feature>
<feature type="mutagenesis site" description="In ale1-2; Seedlings lethality when homozygous due to water loss. Mutant seedling grown under high humidity can survive and show small, crinkled cotyledons and fused leaves." evidence="4">
    <original>G</original>
    <variation>E</variation>
    <location>
        <position position="230"/>
    </location>
</feature>
<feature type="sequence conflict" description="In Ref. 1; BAB70678." evidence="9" ref="1">
    <original>C</original>
    <variation>W</variation>
    <location>
        <position position="15"/>
    </location>
</feature>
<feature type="sequence conflict" description="In Ref. 1; BAB70678." evidence="9" ref="1">
    <original>EGKGEND</original>
    <variation>QGKDENN</variation>
    <location>
        <begin position="36"/>
        <end position="42"/>
    </location>
</feature>
<feature type="sequence conflict" description="In Ref. 1; BAB70678." evidence="9" ref="1">
    <original>I</original>
    <variation>V</variation>
    <location>
        <position position="51"/>
    </location>
</feature>
<feature type="sequence conflict" description="In Ref. 1; BAB70678." evidence="9" ref="1">
    <original>D</original>
    <variation>E</variation>
    <location>
        <position position="83"/>
    </location>
</feature>
<feature type="sequence conflict" description="In Ref. 1; BAB70678." evidence="9" ref="1">
    <original>I</original>
    <variation>F</variation>
    <location>
        <position position="108"/>
    </location>
</feature>
<feature type="sequence conflict" description="In Ref. 1; BAB70678." evidence="9" ref="1">
    <original>G</original>
    <variation>R</variation>
    <location>
        <position position="121"/>
    </location>
</feature>
<feature type="sequence conflict" description="In Ref. 1; BAB70678." evidence="9" ref="1">
    <original>Q</original>
    <variation>P</variation>
    <location>
        <position position="154"/>
    </location>
</feature>
<feature type="sequence conflict" description="In Ref. 1; BAB70678." evidence="9" ref="1">
    <original>L</original>
    <variation>I</variation>
    <location>
        <position position="197"/>
    </location>
</feature>
<feature type="sequence conflict" description="In Ref. 1; BAB70678." evidence="9" ref="1">
    <original>F</original>
    <variation>L</variation>
    <location>
        <position position="211"/>
    </location>
</feature>
<feature type="sequence conflict" description="In Ref. 1; BAB70678." evidence="9" ref="1">
    <original>N</original>
    <variation>S</variation>
    <location>
        <position position="238"/>
    </location>
</feature>
<feature type="sequence conflict" description="In Ref. 1; BAB70678." evidence="9" ref="1">
    <original>V</original>
    <variation>I</variation>
    <location>
        <position position="270"/>
    </location>
</feature>
<feature type="sequence conflict" description="In Ref. 1; BAB70678." evidence="9" ref="1">
    <original>S</original>
    <variation>A</variation>
    <location>
        <position position="285"/>
    </location>
</feature>
<feature type="sequence conflict" description="In Ref. 1; BAB70678." evidence="9" ref="1">
    <original>P</original>
    <variation>S</variation>
    <location>
        <position position="388"/>
    </location>
</feature>
<feature type="sequence conflict" description="In Ref. 1; BAB70678." evidence="9" ref="1">
    <original>G</original>
    <variation>D</variation>
    <location>
        <position position="546"/>
    </location>
</feature>
<feature type="sequence conflict" description="In Ref. 1; BAB70678." evidence="9" ref="1">
    <original>VFAGK</original>
    <variation>IFAGQ</variation>
    <location>
        <begin position="552"/>
        <end position="556"/>
    </location>
</feature>
<feature type="sequence conflict" description="In Ref. 1; BAB70678." evidence="9" ref="1">
    <original>T</original>
    <variation>N</variation>
    <location>
        <position position="574"/>
    </location>
</feature>
<feature type="sequence conflict" description="In Ref. 1; BAB70678." evidence="9" ref="1">
    <original>N</original>
    <variation>T</variation>
    <location>
        <position position="657"/>
    </location>
</feature>
<feature type="sequence conflict" description="In Ref. 1; BAB70678." evidence="9" ref="1">
    <original>D</original>
    <variation>N</variation>
    <location>
        <position position="758"/>
    </location>
</feature>